<protein>
    <recommendedName>
        <fullName evidence="1">Anthranilate phosphoribosyltransferase</fullName>
        <ecNumber evidence="1">2.4.2.18</ecNumber>
    </recommendedName>
</protein>
<reference key="1">
    <citation type="journal article" date="2010" name="Genome Biol. Evol.">
        <title>Continuing evolution of Burkholderia mallei through genome reduction and large-scale rearrangements.</title>
        <authorList>
            <person name="Losada L."/>
            <person name="Ronning C.M."/>
            <person name="DeShazer D."/>
            <person name="Woods D."/>
            <person name="Fedorova N."/>
            <person name="Kim H.S."/>
            <person name="Shabalina S.A."/>
            <person name="Pearson T.R."/>
            <person name="Brinkac L."/>
            <person name="Tan P."/>
            <person name="Nandi T."/>
            <person name="Crabtree J."/>
            <person name="Badger J."/>
            <person name="Beckstrom-Sternberg S."/>
            <person name="Saqib M."/>
            <person name="Schutzer S.E."/>
            <person name="Keim P."/>
            <person name="Nierman W.C."/>
        </authorList>
    </citation>
    <scope>NUCLEOTIDE SEQUENCE [LARGE SCALE GENOMIC DNA]</scope>
    <source>
        <strain>NCTC 10229</strain>
    </source>
</reference>
<comment type="function">
    <text evidence="1">Catalyzes the transfer of the phosphoribosyl group of 5-phosphorylribose-1-pyrophosphate (PRPP) to anthranilate to yield N-(5'-phosphoribosyl)-anthranilate (PRA).</text>
</comment>
<comment type="catalytic activity">
    <reaction evidence="1">
        <text>N-(5-phospho-beta-D-ribosyl)anthranilate + diphosphate = 5-phospho-alpha-D-ribose 1-diphosphate + anthranilate</text>
        <dbReference type="Rhea" id="RHEA:11768"/>
        <dbReference type="ChEBI" id="CHEBI:16567"/>
        <dbReference type="ChEBI" id="CHEBI:18277"/>
        <dbReference type="ChEBI" id="CHEBI:33019"/>
        <dbReference type="ChEBI" id="CHEBI:58017"/>
        <dbReference type="EC" id="2.4.2.18"/>
    </reaction>
</comment>
<comment type="cofactor">
    <cofactor evidence="1">
        <name>Mg(2+)</name>
        <dbReference type="ChEBI" id="CHEBI:18420"/>
    </cofactor>
    <text evidence="1">Binds 2 magnesium ions per monomer.</text>
</comment>
<comment type="pathway">
    <text evidence="1">Amino-acid biosynthesis; L-tryptophan biosynthesis; L-tryptophan from chorismate: step 2/5.</text>
</comment>
<comment type="subunit">
    <text evidence="1">Homodimer.</text>
</comment>
<comment type="similarity">
    <text evidence="1">Belongs to the anthranilate phosphoribosyltransferase family.</text>
</comment>
<proteinExistence type="inferred from homology"/>
<sequence length="343" mass="37017">MTITPQEALQRTIEHREIFHDEMLHLMRLIMRGDMSPVMAAAIITGLRVKKETIGEIAAAATVMREFARRVEVEDNANFVDIVGTGGDGSHTFNISTATMFVAAAAGAKVAKHGNRGVSSKSGSADVLEALGVNIDLQPEQVAASIAETGMGFMFAPNHHPAMRNIAPVRRELGVRTIFNILGPLTNPADAPNQLMGVFHPDLVGIQVRVMQRLGAQHVLVVYGKDGMDEVSLGAATLVGELRDGEVREYEIHPEDFGMQMVSNRTLKVESADESRVMLLEALGNKPGVAREIVTLNAGTALYSADVAGSIADGIQLARDAIASGRAREKVDELVRFTQQFKR</sequence>
<organism>
    <name type="scientific">Burkholderia mallei (strain NCTC 10229)</name>
    <dbReference type="NCBI Taxonomy" id="412022"/>
    <lineage>
        <taxon>Bacteria</taxon>
        <taxon>Pseudomonadati</taxon>
        <taxon>Pseudomonadota</taxon>
        <taxon>Betaproteobacteria</taxon>
        <taxon>Burkholderiales</taxon>
        <taxon>Burkholderiaceae</taxon>
        <taxon>Burkholderia</taxon>
        <taxon>pseudomallei group</taxon>
    </lineage>
</organism>
<name>TRPD_BURM9</name>
<evidence type="ECO:0000255" key="1">
    <source>
        <dbReference type="HAMAP-Rule" id="MF_00211"/>
    </source>
</evidence>
<feature type="chain" id="PRO_1000042997" description="Anthranilate phosphoribosyltransferase">
    <location>
        <begin position="1"/>
        <end position="343"/>
    </location>
</feature>
<feature type="binding site" evidence="1">
    <location>
        <position position="84"/>
    </location>
    <ligand>
        <name>5-phospho-alpha-D-ribose 1-diphosphate</name>
        <dbReference type="ChEBI" id="CHEBI:58017"/>
    </ligand>
</feature>
<feature type="binding site" evidence="1">
    <location>
        <position position="84"/>
    </location>
    <ligand>
        <name>anthranilate</name>
        <dbReference type="ChEBI" id="CHEBI:16567"/>
        <label>1</label>
    </ligand>
</feature>
<feature type="binding site" evidence="1">
    <location>
        <begin position="87"/>
        <end position="88"/>
    </location>
    <ligand>
        <name>5-phospho-alpha-D-ribose 1-diphosphate</name>
        <dbReference type="ChEBI" id="CHEBI:58017"/>
    </ligand>
</feature>
<feature type="binding site" evidence="1">
    <location>
        <position position="92"/>
    </location>
    <ligand>
        <name>5-phospho-alpha-D-ribose 1-diphosphate</name>
        <dbReference type="ChEBI" id="CHEBI:58017"/>
    </ligand>
</feature>
<feature type="binding site" evidence="1">
    <location>
        <begin position="94"/>
        <end position="97"/>
    </location>
    <ligand>
        <name>5-phospho-alpha-D-ribose 1-diphosphate</name>
        <dbReference type="ChEBI" id="CHEBI:58017"/>
    </ligand>
</feature>
<feature type="binding site" evidence="1">
    <location>
        <position position="96"/>
    </location>
    <ligand>
        <name>Mg(2+)</name>
        <dbReference type="ChEBI" id="CHEBI:18420"/>
        <label>1</label>
    </ligand>
</feature>
<feature type="binding site" evidence="1">
    <location>
        <begin position="112"/>
        <end position="120"/>
    </location>
    <ligand>
        <name>5-phospho-alpha-D-ribose 1-diphosphate</name>
        <dbReference type="ChEBI" id="CHEBI:58017"/>
    </ligand>
</feature>
<feature type="binding site" evidence="1">
    <location>
        <position position="115"/>
    </location>
    <ligand>
        <name>anthranilate</name>
        <dbReference type="ChEBI" id="CHEBI:16567"/>
        <label>1</label>
    </ligand>
</feature>
<feature type="binding site" evidence="1">
    <location>
        <position position="124"/>
    </location>
    <ligand>
        <name>5-phospho-alpha-D-ribose 1-diphosphate</name>
        <dbReference type="ChEBI" id="CHEBI:58017"/>
    </ligand>
</feature>
<feature type="binding site" evidence="1">
    <location>
        <position position="170"/>
    </location>
    <ligand>
        <name>anthranilate</name>
        <dbReference type="ChEBI" id="CHEBI:16567"/>
        <label>2</label>
    </ligand>
</feature>
<feature type="binding site" evidence="1">
    <location>
        <position position="229"/>
    </location>
    <ligand>
        <name>Mg(2+)</name>
        <dbReference type="ChEBI" id="CHEBI:18420"/>
        <label>2</label>
    </ligand>
</feature>
<feature type="binding site" evidence="1">
    <location>
        <position position="230"/>
    </location>
    <ligand>
        <name>Mg(2+)</name>
        <dbReference type="ChEBI" id="CHEBI:18420"/>
        <label>1</label>
    </ligand>
</feature>
<feature type="binding site" evidence="1">
    <location>
        <position position="230"/>
    </location>
    <ligand>
        <name>Mg(2+)</name>
        <dbReference type="ChEBI" id="CHEBI:18420"/>
        <label>2</label>
    </ligand>
</feature>
<dbReference type="EC" id="2.4.2.18" evidence="1"/>
<dbReference type="EMBL" id="CP000545">
    <property type="protein sequence ID" value="ABN00563.1"/>
    <property type="molecule type" value="Genomic_DNA"/>
</dbReference>
<dbReference type="RefSeq" id="WP_004186823.1">
    <property type="nucleotide sequence ID" value="NC_008835.1"/>
</dbReference>
<dbReference type="SMR" id="A2RYI2"/>
<dbReference type="GeneID" id="93061660"/>
<dbReference type="KEGG" id="bml:BMA10229_0942"/>
<dbReference type="HOGENOM" id="CLU_034315_2_1_4"/>
<dbReference type="UniPathway" id="UPA00035">
    <property type="reaction ID" value="UER00041"/>
</dbReference>
<dbReference type="Proteomes" id="UP000002283">
    <property type="component" value="Chromosome II"/>
</dbReference>
<dbReference type="GO" id="GO:0005829">
    <property type="term" value="C:cytosol"/>
    <property type="evidence" value="ECO:0007669"/>
    <property type="project" value="TreeGrafter"/>
</dbReference>
<dbReference type="GO" id="GO:0004048">
    <property type="term" value="F:anthranilate phosphoribosyltransferase activity"/>
    <property type="evidence" value="ECO:0007669"/>
    <property type="project" value="UniProtKB-UniRule"/>
</dbReference>
<dbReference type="GO" id="GO:0000287">
    <property type="term" value="F:magnesium ion binding"/>
    <property type="evidence" value="ECO:0007669"/>
    <property type="project" value="UniProtKB-UniRule"/>
</dbReference>
<dbReference type="GO" id="GO:0000162">
    <property type="term" value="P:L-tryptophan biosynthetic process"/>
    <property type="evidence" value="ECO:0007669"/>
    <property type="project" value="UniProtKB-UniRule"/>
</dbReference>
<dbReference type="FunFam" id="1.20.970.10:FF:000006">
    <property type="entry name" value="Anthranilate phosphoribosyltransferase"/>
    <property type="match status" value="1"/>
</dbReference>
<dbReference type="FunFam" id="3.40.1030.10:FF:000002">
    <property type="entry name" value="Anthranilate phosphoribosyltransferase"/>
    <property type="match status" value="1"/>
</dbReference>
<dbReference type="Gene3D" id="3.40.1030.10">
    <property type="entry name" value="Nucleoside phosphorylase/phosphoribosyltransferase catalytic domain"/>
    <property type="match status" value="1"/>
</dbReference>
<dbReference type="Gene3D" id="1.20.970.10">
    <property type="entry name" value="Transferase, Pyrimidine Nucleoside Phosphorylase, Chain C"/>
    <property type="match status" value="1"/>
</dbReference>
<dbReference type="HAMAP" id="MF_00211">
    <property type="entry name" value="TrpD"/>
    <property type="match status" value="1"/>
</dbReference>
<dbReference type="InterPro" id="IPR005940">
    <property type="entry name" value="Anthranilate_Pribosyl_Tfrase"/>
</dbReference>
<dbReference type="InterPro" id="IPR000312">
    <property type="entry name" value="Glycosyl_Trfase_fam3"/>
</dbReference>
<dbReference type="InterPro" id="IPR017459">
    <property type="entry name" value="Glycosyl_Trfase_fam3_N_dom"/>
</dbReference>
<dbReference type="InterPro" id="IPR036320">
    <property type="entry name" value="Glycosyl_Trfase_fam3_N_dom_sf"/>
</dbReference>
<dbReference type="InterPro" id="IPR035902">
    <property type="entry name" value="Nuc_phospho_transferase"/>
</dbReference>
<dbReference type="NCBIfam" id="TIGR01245">
    <property type="entry name" value="trpD"/>
    <property type="match status" value="1"/>
</dbReference>
<dbReference type="PANTHER" id="PTHR43285">
    <property type="entry name" value="ANTHRANILATE PHOSPHORIBOSYLTRANSFERASE"/>
    <property type="match status" value="1"/>
</dbReference>
<dbReference type="PANTHER" id="PTHR43285:SF2">
    <property type="entry name" value="ANTHRANILATE PHOSPHORIBOSYLTRANSFERASE"/>
    <property type="match status" value="1"/>
</dbReference>
<dbReference type="Pfam" id="PF02885">
    <property type="entry name" value="Glycos_trans_3N"/>
    <property type="match status" value="1"/>
</dbReference>
<dbReference type="Pfam" id="PF00591">
    <property type="entry name" value="Glycos_transf_3"/>
    <property type="match status" value="1"/>
</dbReference>
<dbReference type="SUPFAM" id="SSF52418">
    <property type="entry name" value="Nucleoside phosphorylase/phosphoribosyltransferase catalytic domain"/>
    <property type="match status" value="1"/>
</dbReference>
<dbReference type="SUPFAM" id="SSF47648">
    <property type="entry name" value="Nucleoside phosphorylase/phosphoribosyltransferase N-terminal domain"/>
    <property type="match status" value="1"/>
</dbReference>
<gene>
    <name evidence="1" type="primary">trpD</name>
    <name type="ordered locus">BMA10229_0942</name>
</gene>
<keyword id="KW-0028">Amino-acid biosynthesis</keyword>
<keyword id="KW-0057">Aromatic amino acid biosynthesis</keyword>
<keyword id="KW-0328">Glycosyltransferase</keyword>
<keyword id="KW-0460">Magnesium</keyword>
<keyword id="KW-0479">Metal-binding</keyword>
<keyword id="KW-0808">Transferase</keyword>
<keyword id="KW-0822">Tryptophan biosynthesis</keyword>
<accession>A2RYI2</accession>